<organism>
    <name type="scientific">Oceanobacillus iheyensis (strain DSM 14371 / CIP 107618 / JCM 11309 / KCTC 3954 / HTE831)</name>
    <dbReference type="NCBI Taxonomy" id="221109"/>
    <lineage>
        <taxon>Bacteria</taxon>
        <taxon>Bacillati</taxon>
        <taxon>Bacillota</taxon>
        <taxon>Bacilli</taxon>
        <taxon>Bacillales</taxon>
        <taxon>Bacillaceae</taxon>
        <taxon>Oceanobacillus</taxon>
    </lineage>
</organism>
<reference key="1">
    <citation type="journal article" date="2002" name="Nucleic Acids Res.">
        <title>Genome sequence of Oceanobacillus iheyensis isolated from the Iheya Ridge and its unexpected adaptive capabilities to extreme environments.</title>
        <authorList>
            <person name="Takami H."/>
            <person name="Takaki Y."/>
            <person name="Uchiyama I."/>
        </authorList>
    </citation>
    <scope>NUCLEOTIDE SEQUENCE [LARGE SCALE GENOMIC DNA]</scope>
    <source>
        <strain>DSM 14371 / CIP 107618 / JCM 11309 / KCTC 3954 / HTE831</strain>
    </source>
</reference>
<comment type="function">
    <text evidence="1">One of several proteins that assist in the late maturation steps of the functional core of the 30S ribosomal subunit. Helps release RbfA from mature subunits. May play a role in the assembly of ribosomal proteins into the subunit. Circularly permuted GTPase that catalyzes slow GTP hydrolysis, GTPase activity is stimulated by the 30S ribosomal subunit.</text>
</comment>
<comment type="cofactor">
    <cofactor evidence="1">
        <name>Zn(2+)</name>
        <dbReference type="ChEBI" id="CHEBI:29105"/>
    </cofactor>
    <text evidence="1">Binds 1 zinc ion per subunit.</text>
</comment>
<comment type="subunit">
    <text evidence="1">Monomer. Associates with 30S ribosomal subunit, binds 16S rRNA.</text>
</comment>
<comment type="subcellular location">
    <subcellularLocation>
        <location evidence="1">Cytoplasm</location>
    </subcellularLocation>
</comment>
<comment type="similarity">
    <text evidence="1">Belongs to the TRAFAC class YlqF/YawG GTPase family. RsgA subfamily.</text>
</comment>
<dbReference type="EC" id="3.6.1.-" evidence="1"/>
<dbReference type="EMBL" id="BA000028">
    <property type="protein sequence ID" value="BAC13466.1"/>
    <property type="molecule type" value="Genomic_DNA"/>
</dbReference>
<dbReference type="RefSeq" id="WP_011065911.1">
    <property type="nucleotide sequence ID" value="NC_004193.1"/>
</dbReference>
<dbReference type="SMR" id="Q8ER21"/>
<dbReference type="STRING" id="221109.gene:10733750"/>
<dbReference type="KEGG" id="oih:OB1510"/>
<dbReference type="eggNOG" id="COG1162">
    <property type="taxonomic scope" value="Bacteria"/>
</dbReference>
<dbReference type="HOGENOM" id="CLU_033617_2_1_9"/>
<dbReference type="OrthoDB" id="9809485at2"/>
<dbReference type="PhylomeDB" id="Q8ER21"/>
<dbReference type="Proteomes" id="UP000000822">
    <property type="component" value="Chromosome"/>
</dbReference>
<dbReference type="GO" id="GO:0005737">
    <property type="term" value="C:cytoplasm"/>
    <property type="evidence" value="ECO:0007669"/>
    <property type="project" value="UniProtKB-SubCell"/>
</dbReference>
<dbReference type="GO" id="GO:0005525">
    <property type="term" value="F:GTP binding"/>
    <property type="evidence" value="ECO:0007669"/>
    <property type="project" value="UniProtKB-UniRule"/>
</dbReference>
<dbReference type="GO" id="GO:0003924">
    <property type="term" value="F:GTPase activity"/>
    <property type="evidence" value="ECO:0007669"/>
    <property type="project" value="UniProtKB-UniRule"/>
</dbReference>
<dbReference type="GO" id="GO:0046872">
    <property type="term" value="F:metal ion binding"/>
    <property type="evidence" value="ECO:0007669"/>
    <property type="project" value="UniProtKB-KW"/>
</dbReference>
<dbReference type="GO" id="GO:0019843">
    <property type="term" value="F:rRNA binding"/>
    <property type="evidence" value="ECO:0007669"/>
    <property type="project" value="UniProtKB-KW"/>
</dbReference>
<dbReference type="GO" id="GO:0042274">
    <property type="term" value="P:ribosomal small subunit biogenesis"/>
    <property type="evidence" value="ECO:0007669"/>
    <property type="project" value="UniProtKB-UniRule"/>
</dbReference>
<dbReference type="CDD" id="cd04466">
    <property type="entry name" value="S1_YloQ_GTPase"/>
    <property type="match status" value="1"/>
</dbReference>
<dbReference type="CDD" id="cd01854">
    <property type="entry name" value="YjeQ_EngC"/>
    <property type="match status" value="1"/>
</dbReference>
<dbReference type="Gene3D" id="2.40.50.140">
    <property type="entry name" value="Nucleic acid-binding proteins"/>
    <property type="match status" value="1"/>
</dbReference>
<dbReference type="Gene3D" id="3.40.50.300">
    <property type="entry name" value="P-loop containing nucleotide triphosphate hydrolases"/>
    <property type="match status" value="1"/>
</dbReference>
<dbReference type="Gene3D" id="1.10.40.50">
    <property type="entry name" value="Probable gtpase engc, domain 3"/>
    <property type="match status" value="1"/>
</dbReference>
<dbReference type="HAMAP" id="MF_01820">
    <property type="entry name" value="GTPase_RsgA"/>
    <property type="match status" value="1"/>
</dbReference>
<dbReference type="InterPro" id="IPR030378">
    <property type="entry name" value="G_CP_dom"/>
</dbReference>
<dbReference type="InterPro" id="IPR012340">
    <property type="entry name" value="NA-bd_OB-fold"/>
</dbReference>
<dbReference type="InterPro" id="IPR027417">
    <property type="entry name" value="P-loop_NTPase"/>
</dbReference>
<dbReference type="InterPro" id="IPR004881">
    <property type="entry name" value="Ribosome_biogen_GTPase_RsgA"/>
</dbReference>
<dbReference type="InterPro" id="IPR010914">
    <property type="entry name" value="RsgA_GTPase_dom"/>
</dbReference>
<dbReference type="InterPro" id="IPR031944">
    <property type="entry name" value="RsgA_N"/>
</dbReference>
<dbReference type="NCBIfam" id="TIGR00157">
    <property type="entry name" value="ribosome small subunit-dependent GTPase A"/>
    <property type="match status" value="1"/>
</dbReference>
<dbReference type="PANTHER" id="PTHR32120">
    <property type="entry name" value="SMALL RIBOSOMAL SUBUNIT BIOGENESIS GTPASE RSGA"/>
    <property type="match status" value="1"/>
</dbReference>
<dbReference type="PANTHER" id="PTHR32120:SF11">
    <property type="entry name" value="SMALL RIBOSOMAL SUBUNIT BIOGENESIS GTPASE RSGA 1, MITOCHONDRIAL-RELATED"/>
    <property type="match status" value="1"/>
</dbReference>
<dbReference type="Pfam" id="PF03193">
    <property type="entry name" value="RsgA_GTPase"/>
    <property type="match status" value="1"/>
</dbReference>
<dbReference type="Pfam" id="PF16745">
    <property type="entry name" value="RsgA_N"/>
    <property type="match status" value="1"/>
</dbReference>
<dbReference type="SUPFAM" id="SSF50249">
    <property type="entry name" value="Nucleic acid-binding proteins"/>
    <property type="match status" value="1"/>
</dbReference>
<dbReference type="SUPFAM" id="SSF52540">
    <property type="entry name" value="P-loop containing nucleoside triphosphate hydrolases"/>
    <property type="match status" value="1"/>
</dbReference>
<dbReference type="PROSITE" id="PS50936">
    <property type="entry name" value="ENGC_GTPASE"/>
    <property type="match status" value="1"/>
</dbReference>
<dbReference type="PROSITE" id="PS51721">
    <property type="entry name" value="G_CP"/>
    <property type="match status" value="1"/>
</dbReference>
<name>RSGA2_OCEIH</name>
<evidence type="ECO:0000255" key="1">
    <source>
        <dbReference type="HAMAP-Rule" id="MF_01820"/>
    </source>
</evidence>
<evidence type="ECO:0000255" key="2">
    <source>
        <dbReference type="PROSITE-ProRule" id="PRU01058"/>
    </source>
</evidence>
<protein>
    <recommendedName>
        <fullName evidence="1">Small ribosomal subunit biogenesis GTPase RsgA 2</fullName>
        <ecNumber evidence="1">3.6.1.-</ecNumber>
    </recommendedName>
</protein>
<gene>
    <name evidence="1" type="primary">rsgA2</name>
    <name type="ordered locus">OB1510</name>
</gene>
<sequence length="293" mass="33617">MAEGRIIKALSGFYYVQSDNQQFVCKGRGLFRNKKITPLVGDYVEFEPKDDNEGYIMEIKERSNELVRPPIANIDQAIIVSSAVDPDFTTLLLDRFLVLIESKHIQPIILITKVDLLNEDQLENIKLYKQHYEKIGYRVELVSSKNQDLLPELEPYFDEKVSVFAGQSGVGKSSLINVLDPSLLLETAEISKSLGRGKHTTRHVELMKIGNGLVADTPGFSVLEFREIEAEELADSFPEFNARMHLCKFRGCMHDKEPKCAVKEAVENEEIAVFRYNHYLRFLEEIQTRKPRY</sequence>
<accession>Q8ER21</accession>
<keyword id="KW-0963">Cytoplasm</keyword>
<keyword id="KW-0342">GTP-binding</keyword>
<keyword id="KW-0378">Hydrolase</keyword>
<keyword id="KW-0479">Metal-binding</keyword>
<keyword id="KW-0547">Nucleotide-binding</keyword>
<keyword id="KW-1185">Reference proteome</keyword>
<keyword id="KW-0690">Ribosome biogenesis</keyword>
<keyword id="KW-0694">RNA-binding</keyword>
<keyword id="KW-0699">rRNA-binding</keyword>
<keyword id="KW-0862">Zinc</keyword>
<proteinExistence type="inferred from homology"/>
<feature type="chain" id="PRO_0000171501" description="Small ribosomal subunit biogenesis GTPase RsgA 2">
    <location>
        <begin position="1"/>
        <end position="293"/>
    </location>
</feature>
<feature type="domain" description="CP-type G" evidence="2">
    <location>
        <begin position="63"/>
        <end position="223"/>
    </location>
</feature>
<feature type="binding site" evidence="1">
    <location>
        <begin position="112"/>
        <end position="115"/>
    </location>
    <ligand>
        <name>GTP</name>
        <dbReference type="ChEBI" id="CHEBI:37565"/>
    </ligand>
</feature>
<feature type="binding site" evidence="1">
    <location>
        <begin position="166"/>
        <end position="174"/>
    </location>
    <ligand>
        <name>GTP</name>
        <dbReference type="ChEBI" id="CHEBI:37565"/>
    </ligand>
</feature>
<feature type="binding site" evidence="1">
    <location>
        <position position="247"/>
    </location>
    <ligand>
        <name>Zn(2+)</name>
        <dbReference type="ChEBI" id="CHEBI:29105"/>
    </ligand>
</feature>
<feature type="binding site" evidence="1">
    <location>
        <position position="252"/>
    </location>
    <ligand>
        <name>Zn(2+)</name>
        <dbReference type="ChEBI" id="CHEBI:29105"/>
    </ligand>
</feature>
<feature type="binding site" evidence="1">
    <location>
        <position position="254"/>
    </location>
    <ligand>
        <name>Zn(2+)</name>
        <dbReference type="ChEBI" id="CHEBI:29105"/>
    </ligand>
</feature>
<feature type="binding site" evidence="1">
    <location>
        <position position="260"/>
    </location>
    <ligand>
        <name>Zn(2+)</name>
        <dbReference type="ChEBI" id="CHEBI:29105"/>
    </ligand>
</feature>